<gene>
    <name evidence="5" type="primary">TINCR</name>
    <name evidence="5" type="synonym">LINC00036</name>
    <name evidence="5" type="synonym">NCRNA00036</name>
    <name evidence="5" type="synonym">PLAC2</name>
</gene>
<protein>
    <recommendedName>
        <fullName evidence="4">Ubiquitin domain-containing protein TINCR</fullName>
    </recommendedName>
    <alternativeName>
        <fullName>Placenta-specific protein 2</fullName>
    </alternativeName>
    <alternativeName>
        <fullName evidence="3">Terminal differentiation-induced cornification regulator</fullName>
    </alternativeName>
</protein>
<evidence type="ECO:0000255" key="1">
    <source>
        <dbReference type="PROSITE-ProRule" id="PRU00214"/>
    </source>
</evidence>
<evidence type="ECO:0000269" key="2">
    <source>
    </source>
</evidence>
<evidence type="ECO:0000303" key="3">
    <source>
    </source>
</evidence>
<evidence type="ECO:0000305" key="4"/>
<evidence type="ECO:0000312" key="5">
    <source>
        <dbReference type="HGNC" id="HGNC:14607"/>
    </source>
</evidence>
<evidence type="ECO:0007829" key="6">
    <source>
        <dbReference type="PDB" id="7MRJ"/>
    </source>
</evidence>
<reference key="1">
    <citation type="journal article" date="2004" name="Nature">
        <title>The DNA sequence and biology of human chromosome 19.</title>
        <authorList>
            <person name="Grimwood J."/>
            <person name="Gordon L.A."/>
            <person name="Olsen A.S."/>
            <person name="Terry A."/>
            <person name="Schmutz J."/>
            <person name="Lamerdin J.E."/>
            <person name="Hellsten U."/>
            <person name="Goodstein D."/>
            <person name="Couronne O."/>
            <person name="Tran-Gyamfi M."/>
            <person name="Aerts A."/>
            <person name="Altherr M."/>
            <person name="Ashworth L."/>
            <person name="Bajorek E."/>
            <person name="Black S."/>
            <person name="Branscomb E."/>
            <person name="Caenepeel S."/>
            <person name="Carrano A.V."/>
            <person name="Caoile C."/>
            <person name="Chan Y.M."/>
            <person name="Christensen M."/>
            <person name="Cleland C.A."/>
            <person name="Copeland A."/>
            <person name="Dalin E."/>
            <person name="Dehal P."/>
            <person name="Denys M."/>
            <person name="Detter J.C."/>
            <person name="Escobar J."/>
            <person name="Flowers D."/>
            <person name="Fotopulos D."/>
            <person name="Garcia C."/>
            <person name="Georgescu A.M."/>
            <person name="Glavina T."/>
            <person name="Gomez M."/>
            <person name="Gonzales E."/>
            <person name="Groza M."/>
            <person name="Hammon N."/>
            <person name="Hawkins T."/>
            <person name="Haydu L."/>
            <person name="Ho I."/>
            <person name="Huang W."/>
            <person name="Israni S."/>
            <person name="Jett J."/>
            <person name="Kadner K."/>
            <person name="Kimball H."/>
            <person name="Kobayashi A."/>
            <person name="Larionov V."/>
            <person name="Leem S.-H."/>
            <person name="Lopez F."/>
            <person name="Lou Y."/>
            <person name="Lowry S."/>
            <person name="Malfatti S."/>
            <person name="Martinez D."/>
            <person name="McCready P.M."/>
            <person name="Medina C."/>
            <person name="Morgan J."/>
            <person name="Nelson K."/>
            <person name="Nolan M."/>
            <person name="Ovcharenko I."/>
            <person name="Pitluck S."/>
            <person name="Pollard M."/>
            <person name="Popkie A.P."/>
            <person name="Predki P."/>
            <person name="Quan G."/>
            <person name="Ramirez L."/>
            <person name="Rash S."/>
            <person name="Retterer J."/>
            <person name="Rodriguez A."/>
            <person name="Rogers S."/>
            <person name="Salamov A."/>
            <person name="Salazar A."/>
            <person name="She X."/>
            <person name="Smith D."/>
            <person name="Slezak T."/>
            <person name="Solovyev V."/>
            <person name="Thayer N."/>
            <person name="Tice H."/>
            <person name="Tsai M."/>
            <person name="Ustaszewska A."/>
            <person name="Vo N."/>
            <person name="Wagner M."/>
            <person name="Wheeler J."/>
            <person name="Wu K."/>
            <person name="Xie G."/>
            <person name="Yang J."/>
            <person name="Dubchak I."/>
            <person name="Furey T.S."/>
            <person name="DeJong P."/>
            <person name="Dickson M."/>
            <person name="Gordon D."/>
            <person name="Eichler E.E."/>
            <person name="Pennacchio L.A."/>
            <person name="Richardson P."/>
            <person name="Stubbs L."/>
            <person name="Rokhsar D.S."/>
            <person name="Myers R.M."/>
            <person name="Rubin E.M."/>
            <person name="Lucas S.M."/>
        </authorList>
    </citation>
    <scope>NUCLEOTIDE SEQUENCE [LARGE SCALE GENOMIC DNA]</scope>
</reference>
<reference key="2">
    <citation type="journal article" date="2020" name="Exp. Dermatol.">
        <title>TINCR is not a non-coding RNA but encodes a protein component of cornified epidermal keratinocytes.</title>
        <authorList>
            <person name="Eckhart L."/>
            <person name="Lachner J."/>
            <person name="Tschachler E."/>
            <person name="Rice R.H."/>
        </authorList>
    </citation>
    <scope>IDENTIFICATION BY MASS SPECTROMETRY</scope>
    <scope>TISSUE SPECIFICITY</scope>
</reference>
<feature type="chain" id="PRO_0000451870" description="Ubiquitin domain-containing protein TINCR">
    <location>
        <begin position="1"/>
        <end position="120"/>
    </location>
</feature>
<feature type="domain" description="Ubiquitin-like" evidence="1">
    <location>
        <begin position="14"/>
        <end position="83"/>
    </location>
</feature>
<feature type="helix" evidence="6">
    <location>
        <begin position="4"/>
        <end position="7"/>
    </location>
</feature>
<feature type="turn" evidence="6">
    <location>
        <begin position="8"/>
        <end position="11"/>
    </location>
</feature>
<feature type="strand" evidence="6">
    <location>
        <begin position="14"/>
        <end position="20"/>
    </location>
</feature>
<feature type="turn" evidence="6">
    <location>
        <begin position="21"/>
        <end position="24"/>
    </location>
</feature>
<feature type="strand" evidence="6">
    <location>
        <begin position="25"/>
        <end position="31"/>
    </location>
</feature>
<feature type="helix" evidence="6">
    <location>
        <begin position="37"/>
        <end position="46"/>
    </location>
</feature>
<feature type="strand" evidence="6">
    <location>
        <begin position="54"/>
        <end position="58"/>
    </location>
</feature>
<feature type="turn" evidence="6">
    <location>
        <begin position="69"/>
        <end position="73"/>
    </location>
</feature>
<feature type="strand" evidence="6">
    <location>
        <begin position="79"/>
        <end position="84"/>
    </location>
</feature>
<keyword id="KW-0002">3D-structure</keyword>
<keyword id="KW-1267">Proteomics identification</keyword>
<keyword id="KW-1185">Reference proteome</keyword>
<proteinExistence type="evidence at protein level"/>
<name>TINCR_HUMAN</name>
<dbReference type="EMBL" id="AC011533">
    <property type="status" value="NOT_ANNOTATED_CDS"/>
    <property type="molecule type" value="Genomic_DNA"/>
</dbReference>
<dbReference type="EMBL" id="AC093059">
    <property type="status" value="NOT_ANNOTATED_CDS"/>
    <property type="molecule type" value="Genomic_DNA"/>
</dbReference>
<dbReference type="RefSeq" id="NP_001383338.1">
    <property type="nucleotide sequence ID" value="NM_001396409.1"/>
</dbReference>
<dbReference type="PDB" id="7MRJ">
    <property type="method" value="X-ray"/>
    <property type="resolution" value="2.12 A"/>
    <property type="chains" value="A/B=2-86"/>
</dbReference>
<dbReference type="PDBsum" id="7MRJ"/>
<dbReference type="SMR" id="A0A2R8Y7D0"/>
<dbReference type="FunCoup" id="A0A2R8Y7D0">
    <property type="interactions" value="1"/>
</dbReference>
<dbReference type="MassIVE" id="A0A2R8Y7D0"/>
<dbReference type="PeptideAtlas" id="A0A2R8Y7D0"/>
<dbReference type="Ensembl" id="ENST00000646160.1">
    <property type="protein sequence ID" value="ENSP00000496189.1"/>
    <property type="gene ID" value="ENSG00000223573.7"/>
</dbReference>
<dbReference type="GeneID" id="257000"/>
<dbReference type="AGR" id="HGNC:14607"/>
<dbReference type="GeneCards" id="TINCR"/>
<dbReference type="HGNC" id="HGNC:14607">
    <property type="gene designation" value="TINCR"/>
</dbReference>
<dbReference type="HPA" id="ENSG00000223573">
    <property type="expression patterns" value="Tissue enriched (skin)"/>
</dbReference>
<dbReference type="MIM" id="615241">
    <property type="type" value="gene"/>
</dbReference>
<dbReference type="neXtProt" id="NX_A0A2R8Y7D0"/>
<dbReference type="OpenTargets" id="ENSG00000223573"/>
<dbReference type="VEuPathDB" id="HostDB:ENSG00000223573"/>
<dbReference type="GeneTree" id="ENSGT01110000267276"/>
<dbReference type="InParanoid" id="A0A2R8Y7D0"/>
<dbReference type="OrthoDB" id="9924610at2759"/>
<dbReference type="PAN-GO" id="A0A2R8Y7D0">
    <property type="GO annotations" value="0 GO annotations based on evolutionary models"/>
</dbReference>
<dbReference type="SignaLink" id="A0A2R8Y7D0"/>
<dbReference type="ChiTaRS" id="TINCR">
    <property type="organism name" value="human"/>
</dbReference>
<dbReference type="PRO" id="PR:A0A2R8Y7D0"/>
<dbReference type="Proteomes" id="UP000005640">
    <property type="component" value="Chromosome 19"/>
</dbReference>
<dbReference type="Bgee" id="ENSG00000223573">
    <property type="expression patterns" value="Expressed in upper arm skin and 130 other cell types or tissues"/>
</dbReference>
<dbReference type="ExpressionAtlas" id="A0A2R8Y7D0">
    <property type="expression patterns" value="baseline and differential"/>
</dbReference>
<dbReference type="Gene3D" id="3.10.20.90">
    <property type="entry name" value="Phosphatidylinositol 3-kinase Catalytic Subunit, Chain A, domain 1"/>
    <property type="match status" value="1"/>
</dbReference>
<dbReference type="InterPro" id="IPR000626">
    <property type="entry name" value="Ubiquitin-like_dom"/>
</dbReference>
<dbReference type="InterPro" id="IPR029071">
    <property type="entry name" value="Ubiquitin-like_domsf"/>
</dbReference>
<dbReference type="SUPFAM" id="SSF54236">
    <property type="entry name" value="Ubiquitin-like"/>
    <property type="match status" value="1"/>
</dbReference>
<dbReference type="PROSITE" id="PS50053">
    <property type="entry name" value="UBIQUITIN_2"/>
    <property type="match status" value="1"/>
</dbReference>
<organism>
    <name type="scientific">Homo sapiens</name>
    <name type="common">Human</name>
    <dbReference type="NCBI Taxonomy" id="9606"/>
    <lineage>
        <taxon>Eukaryota</taxon>
        <taxon>Metazoa</taxon>
        <taxon>Chordata</taxon>
        <taxon>Craniata</taxon>
        <taxon>Vertebrata</taxon>
        <taxon>Euteleostomi</taxon>
        <taxon>Mammalia</taxon>
        <taxon>Eutheria</taxon>
        <taxon>Euarchontoglires</taxon>
        <taxon>Primates</taxon>
        <taxon>Haplorrhini</taxon>
        <taxon>Catarrhini</taxon>
        <taxon>Hominidae</taxon>
        <taxon>Homo</taxon>
    </lineage>
</organism>
<sequence length="120" mass="13788">MEGLRRGLSRWKRYHIKVHLADEALLLPLTVRPRDTLSDLRAQLVGQGVSSWKRAFYYNARRLDDHQTVRDARLQDGSVLLLVSDPSEAQRLTPAIPALWEAEASRSLESRSSRPAWPTW</sequence>
<comment type="tissue specificity">
    <text evidence="2">Detected in stratum corneum (at protein level).</text>
</comment>
<accession>A0A2R8Y7D0</accession>